<organism>
    <name type="scientific">Arabidopsis thaliana</name>
    <name type="common">Mouse-ear cress</name>
    <dbReference type="NCBI Taxonomy" id="3702"/>
    <lineage>
        <taxon>Eukaryota</taxon>
        <taxon>Viridiplantae</taxon>
        <taxon>Streptophyta</taxon>
        <taxon>Embryophyta</taxon>
        <taxon>Tracheophyta</taxon>
        <taxon>Spermatophyta</taxon>
        <taxon>Magnoliopsida</taxon>
        <taxon>eudicotyledons</taxon>
        <taxon>Gunneridae</taxon>
        <taxon>Pentapetalae</taxon>
        <taxon>rosids</taxon>
        <taxon>malvids</taxon>
        <taxon>Brassicales</taxon>
        <taxon>Brassicaceae</taxon>
        <taxon>Camelineae</taxon>
        <taxon>Arabidopsis</taxon>
    </lineage>
</organism>
<evidence type="ECO:0000255" key="1"/>
<evidence type="ECO:0000255" key="2">
    <source>
        <dbReference type="PROSITE-ProRule" id="PRU00366"/>
    </source>
</evidence>
<evidence type="ECO:0000269" key="3">
    <source>
    </source>
</evidence>
<evidence type="ECO:0000269" key="4">
    <source>
    </source>
</evidence>
<evidence type="ECO:0000269" key="5">
    <source>
    </source>
</evidence>
<evidence type="ECO:0000269" key="6">
    <source>
    </source>
</evidence>
<evidence type="ECO:0000303" key="7">
    <source>
    </source>
</evidence>
<evidence type="ECO:0000303" key="8">
    <source>
    </source>
</evidence>
<evidence type="ECO:0000303" key="9">
    <source>
    </source>
</evidence>
<evidence type="ECO:0000305" key="10"/>
<evidence type="ECO:0000312" key="11">
    <source>
        <dbReference type="Araport" id="AT4G25490"/>
    </source>
</evidence>
<evidence type="ECO:0000312" key="12">
    <source>
        <dbReference type="EMBL" id="CAA18177.1"/>
    </source>
</evidence>
<proteinExistence type="evidence at protein level"/>
<protein>
    <recommendedName>
        <fullName evidence="9">Dehydration-responsive element-binding protein 1B</fullName>
        <shortName evidence="9">Protein DREB1B</shortName>
    </recommendedName>
    <alternativeName>
        <fullName evidence="8">C-repeat/dehydration-responsive element-binding factor 1</fullName>
        <shortName evidence="8">C-repeat-binding factor 1</shortName>
        <shortName evidence="8">CRT/DRE-binding factor 1</shortName>
    </alternativeName>
</protein>
<dbReference type="EMBL" id="U77378">
    <property type="protein sequence ID" value="AAC49662.1"/>
    <property type="molecule type" value="mRNA"/>
</dbReference>
<dbReference type="EMBL" id="AB007788">
    <property type="protein sequence ID" value="BAA33792.1"/>
    <property type="molecule type" value="mRNA"/>
</dbReference>
<dbReference type="EMBL" id="AB013816">
    <property type="protein sequence ID" value="BAA33435.1"/>
    <property type="molecule type" value="Genomic_DNA"/>
</dbReference>
<dbReference type="EMBL" id="AF076155">
    <property type="protein sequence ID" value="AAC99369.1"/>
    <property type="molecule type" value="Genomic_DNA"/>
</dbReference>
<dbReference type="EMBL" id="AY667247">
    <property type="protein sequence ID" value="AAV80413.1"/>
    <property type="molecule type" value="Genomic_DNA"/>
</dbReference>
<dbReference type="EMBL" id="AL022197">
    <property type="protein sequence ID" value="CAA18177.1"/>
    <property type="molecule type" value="Genomic_DNA"/>
</dbReference>
<dbReference type="EMBL" id="AL161563">
    <property type="protein sequence ID" value="CAB81359.1"/>
    <property type="molecule type" value="Genomic_DNA"/>
</dbReference>
<dbReference type="EMBL" id="CP002687">
    <property type="protein sequence ID" value="AEE85066.1"/>
    <property type="molecule type" value="Genomic_DNA"/>
</dbReference>
<dbReference type="PIR" id="JE0298">
    <property type="entry name" value="JE0298"/>
</dbReference>
<dbReference type="RefSeq" id="NP_567721.1">
    <property type="nucleotide sequence ID" value="NM_118681.4"/>
</dbReference>
<dbReference type="SMR" id="P93835"/>
<dbReference type="BioGRID" id="13940">
    <property type="interactions" value="7"/>
</dbReference>
<dbReference type="FunCoup" id="P93835">
    <property type="interactions" value="80"/>
</dbReference>
<dbReference type="IntAct" id="P93835">
    <property type="interactions" value="4"/>
</dbReference>
<dbReference type="STRING" id="3702.P93835"/>
<dbReference type="PaxDb" id="3702-AT4G25490.1"/>
<dbReference type="EnsemblPlants" id="AT4G25490.1">
    <property type="protein sequence ID" value="AT4G25490.1"/>
    <property type="gene ID" value="AT4G25490"/>
</dbReference>
<dbReference type="GeneID" id="828653"/>
<dbReference type="Gramene" id="AT4G25490.1">
    <property type="protein sequence ID" value="AT4G25490.1"/>
    <property type="gene ID" value="AT4G25490"/>
</dbReference>
<dbReference type="KEGG" id="ath:AT4G25490"/>
<dbReference type="Araport" id="AT4G25490"/>
<dbReference type="TAIR" id="AT4G25490">
    <property type="gene designation" value="CBF1"/>
</dbReference>
<dbReference type="eggNOG" id="ENOG502QQ5M">
    <property type="taxonomic scope" value="Eukaryota"/>
</dbReference>
<dbReference type="HOGENOM" id="CLU_063331_1_0_1"/>
<dbReference type="InParanoid" id="P93835"/>
<dbReference type="OMA" id="DYCPTLA"/>
<dbReference type="PhylomeDB" id="P93835"/>
<dbReference type="PRO" id="PR:P93835"/>
<dbReference type="Proteomes" id="UP000006548">
    <property type="component" value="Chromosome 4"/>
</dbReference>
<dbReference type="ExpressionAtlas" id="P93835">
    <property type="expression patterns" value="baseline and differential"/>
</dbReference>
<dbReference type="GO" id="GO:0005634">
    <property type="term" value="C:nucleus"/>
    <property type="evidence" value="ECO:0007669"/>
    <property type="project" value="UniProtKB-SubCell"/>
</dbReference>
<dbReference type="GO" id="GO:0003677">
    <property type="term" value="F:DNA binding"/>
    <property type="evidence" value="ECO:0007669"/>
    <property type="project" value="UniProtKB-KW"/>
</dbReference>
<dbReference type="GO" id="GO:0003700">
    <property type="term" value="F:DNA-binding transcription factor activity"/>
    <property type="evidence" value="ECO:0000250"/>
    <property type="project" value="TAIR"/>
</dbReference>
<dbReference type="GO" id="GO:0009631">
    <property type="term" value="P:cold acclimation"/>
    <property type="evidence" value="ECO:0000315"/>
    <property type="project" value="TAIR"/>
</dbReference>
<dbReference type="GO" id="GO:0045893">
    <property type="term" value="P:positive regulation of DNA-templated transcription"/>
    <property type="evidence" value="ECO:0000314"/>
    <property type="project" value="TAIR"/>
</dbReference>
<dbReference type="GO" id="GO:0009409">
    <property type="term" value="P:response to cold"/>
    <property type="evidence" value="ECO:0000270"/>
    <property type="project" value="TAIR"/>
</dbReference>
<dbReference type="CDD" id="cd00018">
    <property type="entry name" value="AP2"/>
    <property type="match status" value="1"/>
</dbReference>
<dbReference type="FunFam" id="3.30.730.10:FF:000001">
    <property type="entry name" value="Ethylene-responsive transcription factor 2"/>
    <property type="match status" value="1"/>
</dbReference>
<dbReference type="Gene3D" id="3.30.730.10">
    <property type="entry name" value="AP2/ERF domain"/>
    <property type="match status" value="1"/>
</dbReference>
<dbReference type="InterPro" id="IPR001471">
    <property type="entry name" value="AP2/ERF_dom"/>
</dbReference>
<dbReference type="InterPro" id="IPR036955">
    <property type="entry name" value="AP2/ERF_dom_sf"/>
</dbReference>
<dbReference type="InterPro" id="IPR016177">
    <property type="entry name" value="DNA-bd_dom_sf"/>
</dbReference>
<dbReference type="InterPro" id="IPR045277">
    <property type="entry name" value="DRE1A-I"/>
</dbReference>
<dbReference type="PANTHER" id="PTHR31839:SF23">
    <property type="entry name" value="DEHYDRATION-RESPONSIVE ELEMENT-BINDING PROTEIN 1A-RELATED"/>
    <property type="match status" value="1"/>
</dbReference>
<dbReference type="PANTHER" id="PTHR31839">
    <property type="entry name" value="DEHYDRATION-RESPONSIVE ELEMENT-BINDING PROTEIN 1D"/>
    <property type="match status" value="1"/>
</dbReference>
<dbReference type="Pfam" id="PF00847">
    <property type="entry name" value="AP2"/>
    <property type="match status" value="1"/>
</dbReference>
<dbReference type="PRINTS" id="PR00367">
    <property type="entry name" value="ETHRSPELEMNT"/>
</dbReference>
<dbReference type="SMART" id="SM00380">
    <property type="entry name" value="AP2"/>
    <property type="match status" value="1"/>
</dbReference>
<dbReference type="SUPFAM" id="SSF54171">
    <property type="entry name" value="DNA-binding domain"/>
    <property type="match status" value="1"/>
</dbReference>
<dbReference type="PROSITE" id="PS51032">
    <property type="entry name" value="AP2_ERF"/>
    <property type="match status" value="1"/>
</dbReference>
<feature type="chain" id="PRO_0000112529" description="Dehydration-responsive element-binding protein 1B">
    <location>
        <begin position="1"/>
        <end position="213"/>
    </location>
</feature>
<feature type="DNA-binding region" description="AP2/ERF" evidence="2">
    <location>
        <begin position="47"/>
        <end position="104"/>
    </location>
</feature>
<feature type="short sequence motif" description="Nuclear localization signal" evidence="1">
    <location>
        <begin position="32"/>
        <end position="44"/>
    </location>
</feature>
<feature type="sequence variant" description="In strain: cv. Cvi-1." evidence="4">
    <original>E</original>
    <variation>K</variation>
    <location>
        <position position="127"/>
    </location>
</feature>
<feature type="sequence variant" description="In strain: cv. Cvi-1." evidence="4">
    <original>T</original>
    <variation>S</variation>
    <location>
        <position position="178"/>
    </location>
</feature>
<feature type="sequence conflict" description="In Ref. 1; AAC49662, 4; AAC99369 and 5; AAV80413." evidence="10" ref="1 4 5">
    <original>N</original>
    <variation>D</variation>
    <location>
        <position position="143"/>
    </location>
</feature>
<comment type="function">
    <text evidence="3 4">Transcriptional activator that binds specifically to the DNA sequence 5'-[AG]CCGAC-3'. Binding to the C-repeat/DRE element mediates cold-inducible transcription. CBF/DREB1 factors play a key role in freezing tolerance and cold acclimation.</text>
</comment>
<comment type="subunit">
    <text evidence="5">Interacts with 14-3-3 proteins GRF1, GRF3, GRF5, GRF6, GRF7, GRF9 and GRF10 in the nucleus upon freezing.</text>
</comment>
<comment type="subcellular location">
    <subcellularLocation>
        <location evidence="2">Nucleus</location>
    </subcellularLocation>
</comment>
<comment type="induction">
    <text evidence="5 6">By cold stress (PubMed:9735350). Subject to degradation by the 26S proteasome pathway in freezing conditions (PubMed:28344081).</text>
</comment>
<comment type="similarity">
    <text evidence="10">Belongs to the AP2/ERF transcription factor family. ERF subfamily.</text>
</comment>
<gene>
    <name evidence="9" type="primary">DREB1B</name>
    <name evidence="8" type="synonym">CBF1</name>
    <name evidence="7" type="synonym">ERF029</name>
    <name evidence="11" type="ordered locus">At4g25490</name>
    <name evidence="12" type="ORF">M7J2.140</name>
</gene>
<sequence length="213" mass="23830">MNSFSAFSEMFGSDYEPQGGDYCPTLATSCPKKPAGRKKFRETRHPIYRGVRQRNSGKWVSEVREPNKKTRIWLGTFQTAEMAARAHDVAALALRGRSACLNFADSAWRLRIPESTCAKDIQKAAAEAALAFQDETCDTTTTNHGLDMEETMVEAIYTPEQSEGAFYMDEETMFGMPTLLDNMAEGMLLPPPSVQWNHNYDGEGDGDVSLWSY</sequence>
<name>DRE1B_ARATH</name>
<keyword id="KW-0010">Activator</keyword>
<keyword id="KW-0238">DNA-binding</keyword>
<keyword id="KW-0539">Nucleus</keyword>
<keyword id="KW-1185">Reference proteome</keyword>
<keyword id="KW-0346">Stress response</keyword>
<keyword id="KW-0804">Transcription</keyword>
<keyword id="KW-0805">Transcription regulation</keyword>
<accession>P93835</accession>
<accession>O65611</accession>
<accession>Q5QE71</accession>
<reference key="1">
    <citation type="journal article" date="1997" name="Proc. Natl. Acad. Sci. U.S.A.">
        <title>Arabidopsis thaliana CBF1 encodes an AP2 domain-containing transcriptional activator that binds to the C-repeat/DRE, a cis-acting DNA regulatory element that stimulates transcription in response to low temperature and water deficit.</title>
        <authorList>
            <person name="Stockinger E.J."/>
            <person name="Gilmour S.J."/>
            <person name="Thomashow M.F."/>
        </authorList>
    </citation>
    <scope>NUCLEOTIDE SEQUENCE [MRNA]</scope>
    <source>
        <strain>cv. Columbia</strain>
    </source>
</reference>
<reference key="2">
    <citation type="journal article" date="1998" name="Plant Cell">
        <title>Two transcription factors, DREB1 and DREB2, with an EREBP/AP2 DNA binding domain separate two cellular signal transduction pathways in drought- and low-temperature-responsive gene expression, respectively, in Arabidopsis.</title>
        <authorList>
            <person name="Liu Q."/>
            <person name="Kasuga M."/>
            <person name="Sakuma Y."/>
            <person name="Abe H."/>
            <person name="Miura S."/>
            <person name="Yamaguchi-Shinozaki K."/>
            <person name="Shinozaki K."/>
        </authorList>
    </citation>
    <scope>NUCLEOTIDE SEQUENCE [MRNA]</scope>
    <source>
        <strain>cv. Columbia</strain>
    </source>
</reference>
<reference key="3">
    <citation type="journal article" date="1998" name="Biochem. Biophys. Res. Commun.">
        <title>An Arabidopsis gene family encoding DRE/CRT binding proteins involved in low-temperature -responsive gene expression.</title>
        <authorList>
            <person name="Shinwari Z.K."/>
            <person name="Nakashima K."/>
            <person name="Miura S."/>
            <person name="Kasuga M."/>
            <person name="Seki M."/>
            <person name="Yamaguchi-Shinozaki K."/>
            <person name="Shinozaki K."/>
        </authorList>
    </citation>
    <scope>NUCLEOTIDE SEQUENCE [GENOMIC DNA]</scope>
    <scope>INDUCTION</scope>
    <source>
        <strain>cv. Columbia</strain>
    </source>
</reference>
<reference key="4">
    <citation type="journal article" date="1998" name="Plant J.">
        <title>Low temperature regulation of the Arabidopsis CBF family of AP2 transcriptional activators as an early step in cold-induced COR gene expression.</title>
        <authorList>
            <person name="Gilmour S.J."/>
            <person name="Zarka D.G."/>
            <person name="Stockinger E.J."/>
            <person name="Salazar M.P."/>
            <person name="Houghton J.M."/>
            <person name="Thomashow M.F."/>
        </authorList>
    </citation>
    <scope>NUCLEOTIDE SEQUENCE [GENOMIC DNA]</scope>
    <source>
        <strain>cv. Landsberg erecta</strain>
    </source>
</reference>
<reference key="5">
    <citation type="journal article" date="2005" name="Plant Physiol.">
        <title>Genetic and molecular analyses of natural variation indicate CBF2 as a candidate gene for underlying a freezing tolerance quantitative trait locus in Arabidopsis.</title>
        <authorList>
            <person name="Alonso-Blanco C."/>
            <person name="Gomez-Mena C."/>
            <person name="Llorente F."/>
            <person name="Koornneef M."/>
            <person name="Salinas J."/>
            <person name="Martinez-Zapater J.M."/>
        </authorList>
    </citation>
    <scope>NUCLEOTIDE SEQUENCE [GENOMIC DNA]</scope>
    <scope>FUNCTION</scope>
    <scope>VARIANTS LYS-127 AND SER-178</scope>
    <source>
        <strain>cv. Cvi-1</strain>
    </source>
</reference>
<reference key="6">
    <citation type="journal article" date="1999" name="Nature">
        <title>Sequence and analysis of chromosome 4 of the plant Arabidopsis thaliana.</title>
        <authorList>
            <person name="Mayer K.F.X."/>
            <person name="Schueller C."/>
            <person name="Wambutt R."/>
            <person name="Murphy G."/>
            <person name="Volckaert G."/>
            <person name="Pohl T."/>
            <person name="Duesterhoeft A."/>
            <person name="Stiekema W."/>
            <person name="Entian K.-D."/>
            <person name="Terryn N."/>
            <person name="Harris B."/>
            <person name="Ansorge W."/>
            <person name="Brandt P."/>
            <person name="Grivell L.A."/>
            <person name="Rieger M."/>
            <person name="Weichselgartner M."/>
            <person name="de Simone V."/>
            <person name="Obermaier B."/>
            <person name="Mache R."/>
            <person name="Mueller M."/>
            <person name="Kreis M."/>
            <person name="Delseny M."/>
            <person name="Puigdomenech P."/>
            <person name="Watson M."/>
            <person name="Schmidtheini T."/>
            <person name="Reichert B."/>
            <person name="Portetelle D."/>
            <person name="Perez-Alonso M."/>
            <person name="Boutry M."/>
            <person name="Bancroft I."/>
            <person name="Vos P."/>
            <person name="Hoheisel J."/>
            <person name="Zimmermann W."/>
            <person name="Wedler H."/>
            <person name="Ridley P."/>
            <person name="Langham S.-A."/>
            <person name="McCullagh B."/>
            <person name="Bilham L."/>
            <person name="Robben J."/>
            <person name="van der Schueren J."/>
            <person name="Grymonprez B."/>
            <person name="Chuang Y.-J."/>
            <person name="Vandenbussche F."/>
            <person name="Braeken M."/>
            <person name="Weltjens I."/>
            <person name="Voet M."/>
            <person name="Bastiaens I."/>
            <person name="Aert R."/>
            <person name="Defoor E."/>
            <person name="Weitzenegger T."/>
            <person name="Bothe G."/>
            <person name="Ramsperger U."/>
            <person name="Hilbert H."/>
            <person name="Braun M."/>
            <person name="Holzer E."/>
            <person name="Brandt A."/>
            <person name="Peters S."/>
            <person name="van Staveren M."/>
            <person name="Dirkse W."/>
            <person name="Mooijman P."/>
            <person name="Klein Lankhorst R."/>
            <person name="Rose M."/>
            <person name="Hauf J."/>
            <person name="Koetter P."/>
            <person name="Berneiser S."/>
            <person name="Hempel S."/>
            <person name="Feldpausch M."/>
            <person name="Lamberth S."/>
            <person name="Van den Daele H."/>
            <person name="De Keyser A."/>
            <person name="Buysshaert C."/>
            <person name="Gielen J."/>
            <person name="Villarroel R."/>
            <person name="De Clercq R."/>
            <person name="van Montagu M."/>
            <person name="Rogers J."/>
            <person name="Cronin A."/>
            <person name="Quail M.A."/>
            <person name="Bray-Allen S."/>
            <person name="Clark L."/>
            <person name="Doggett J."/>
            <person name="Hall S."/>
            <person name="Kay M."/>
            <person name="Lennard N."/>
            <person name="McLay K."/>
            <person name="Mayes R."/>
            <person name="Pettett A."/>
            <person name="Rajandream M.A."/>
            <person name="Lyne M."/>
            <person name="Benes V."/>
            <person name="Rechmann S."/>
            <person name="Borkova D."/>
            <person name="Bloecker H."/>
            <person name="Scharfe M."/>
            <person name="Grimm M."/>
            <person name="Loehnert T.-H."/>
            <person name="Dose S."/>
            <person name="de Haan M."/>
            <person name="Maarse A.C."/>
            <person name="Schaefer M."/>
            <person name="Mueller-Auer S."/>
            <person name="Gabel C."/>
            <person name="Fuchs M."/>
            <person name="Fartmann B."/>
            <person name="Granderath K."/>
            <person name="Dauner D."/>
            <person name="Herzl A."/>
            <person name="Neumann S."/>
            <person name="Argiriou A."/>
            <person name="Vitale D."/>
            <person name="Liguori R."/>
            <person name="Piravandi E."/>
            <person name="Massenet O."/>
            <person name="Quigley F."/>
            <person name="Clabauld G."/>
            <person name="Muendlein A."/>
            <person name="Felber R."/>
            <person name="Schnabl S."/>
            <person name="Hiller R."/>
            <person name="Schmidt W."/>
            <person name="Lecharny A."/>
            <person name="Aubourg S."/>
            <person name="Chefdor F."/>
            <person name="Cooke R."/>
            <person name="Berger C."/>
            <person name="Monfort A."/>
            <person name="Casacuberta E."/>
            <person name="Gibbons T."/>
            <person name="Weber N."/>
            <person name="Vandenbol M."/>
            <person name="Bargues M."/>
            <person name="Terol J."/>
            <person name="Torres A."/>
            <person name="Perez-Perez A."/>
            <person name="Purnelle B."/>
            <person name="Bent E."/>
            <person name="Johnson S."/>
            <person name="Tacon D."/>
            <person name="Jesse T."/>
            <person name="Heijnen L."/>
            <person name="Schwarz S."/>
            <person name="Scholler P."/>
            <person name="Heber S."/>
            <person name="Francs P."/>
            <person name="Bielke C."/>
            <person name="Frishman D."/>
            <person name="Haase D."/>
            <person name="Lemcke K."/>
            <person name="Mewes H.-W."/>
            <person name="Stocker S."/>
            <person name="Zaccaria P."/>
            <person name="Bevan M."/>
            <person name="Wilson R.K."/>
            <person name="de la Bastide M."/>
            <person name="Habermann K."/>
            <person name="Parnell L."/>
            <person name="Dedhia N."/>
            <person name="Gnoj L."/>
            <person name="Schutz K."/>
            <person name="Huang E."/>
            <person name="Spiegel L."/>
            <person name="Sekhon M."/>
            <person name="Murray J."/>
            <person name="Sheet P."/>
            <person name="Cordes M."/>
            <person name="Abu-Threideh J."/>
            <person name="Stoneking T."/>
            <person name="Kalicki J."/>
            <person name="Graves T."/>
            <person name="Harmon G."/>
            <person name="Edwards J."/>
            <person name="Latreille P."/>
            <person name="Courtney L."/>
            <person name="Cloud J."/>
            <person name="Abbott A."/>
            <person name="Scott K."/>
            <person name="Johnson D."/>
            <person name="Minx P."/>
            <person name="Bentley D."/>
            <person name="Fulton B."/>
            <person name="Miller N."/>
            <person name="Greco T."/>
            <person name="Kemp K."/>
            <person name="Kramer J."/>
            <person name="Fulton L."/>
            <person name="Mardis E."/>
            <person name="Dante M."/>
            <person name="Pepin K."/>
            <person name="Hillier L.W."/>
            <person name="Nelson J."/>
            <person name="Spieth J."/>
            <person name="Ryan E."/>
            <person name="Andrews S."/>
            <person name="Geisel C."/>
            <person name="Layman D."/>
            <person name="Du H."/>
            <person name="Ali J."/>
            <person name="Berghoff A."/>
            <person name="Jones K."/>
            <person name="Drone K."/>
            <person name="Cotton M."/>
            <person name="Joshu C."/>
            <person name="Antonoiu B."/>
            <person name="Zidanic M."/>
            <person name="Strong C."/>
            <person name="Sun H."/>
            <person name="Lamar B."/>
            <person name="Yordan C."/>
            <person name="Ma P."/>
            <person name="Zhong J."/>
            <person name="Preston R."/>
            <person name="Vil D."/>
            <person name="Shekher M."/>
            <person name="Matero A."/>
            <person name="Shah R."/>
            <person name="Swaby I.K."/>
            <person name="O'Shaughnessy A."/>
            <person name="Rodriguez M."/>
            <person name="Hoffman J."/>
            <person name="Till S."/>
            <person name="Granat S."/>
            <person name="Shohdy N."/>
            <person name="Hasegawa A."/>
            <person name="Hameed A."/>
            <person name="Lodhi M."/>
            <person name="Johnson A."/>
            <person name="Chen E."/>
            <person name="Marra M.A."/>
            <person name="Martienssen R."/>
            <person name="McCombie W.R."/>
        </authorList>
    </citation>
    <scope>NUCLEOTIDE SEQUENCE [LARGE SCALE GENOMIC DNA]</scope>
    <source>
        <strain>cv. Columbia</strain>
    </source>
</reference>
<reference key="7">
    <citation type="journal article" date="2017" name="Plant J.">
        <title>Araport11: a complete reannotation of the Arabidopsis thaliana reference genome.</title>
        <authorList>
            <person name="Cheng C.Y."/>
            <person name="Krishnakumar V."/>
            <person name="Chan A.P."/>
            <person name="Thibaud-Nissen F."/>
            <person name="Schobel S."/>
            <person name="Town C.D."/>
        </authorList>
    </citation>
    <scope>GENOME REANNOTATION</scope>
    <source>
        <strain>cv. Columbia</strain>
    </source>
</reference>
<reference key="8">
    <citation type="journal article" date="2002" name="Biochem. Biophys. Res. Commun.">
        <title>DNA-binding specificity of the ERF/AP2 domain of Arabidopsis DREBs, transcription factors involved in dehydration- and cold-inducible gene expression.</title>
        <authorList>
            <person name="Sakuma Y."/>
            <person name="Liu Q."/>
            <person name="Dubouzet J.G."/>
            <person name="Abe H."/>
            <person name="Shinozaki K."/>
            <person name="Yamaguchi-Shinozaki K."/>
        </authorList>
    </citation>
    <scope>GENE FAMILY</scope>
    <scope>FUNCTION</scope>
</reference>
<reference key="9">
    <citation type="journal article" date="2006" name="Plant Physiol.">
        <title>Genome-wide analysis of the ERF gene family in Arabidopsis and rice.</title>
        <authorList>
            <person name="Nakano T."/>
            <person name="Suzuki K."/>
            <person name="Fujimura T."/>
            <person name="Shinshi H."/>
        </authorList>
    </citation>
    <scope>GENE FAMILY</scope>
    <scope>NOMENCLATURE</scope>
</reference>
<reference key="10">
    <citation type="journal article" date="2017" name="Mol. Cell">
        <title>Plasma membrane CRPK1-mediated phosphorylation of 14-3-3 proteins induces their nuclear import to fine-tune CBF signaling during cold response.</title>
        <authorList>
            <person name="Liu Z."/>
            <person name="Jia Y."/>
            <person name="Ding Y."/>
            <person name="Shi Y."/>
            <person name="Li Z."/>
            <person name="Guo Y."/>
            <person name="Gong Z."/>
            <person name="Yang S."/>
        </authorList>
    </citation>
    <scope>INTERACTION WITH GRF1; GRF3; GRF5; GRF6; GRF7; GRF9 AND GRF10</scope>
    <scope>REGULATION BY PROTEASOME</scope>
    <source>
        <strain>cv. Columbia</strain>
    </source>
</reference>